<feature type="signal peptide" evidence="1">
    <location>
        <begin position="1"/>
        <end position="23"/>
    </location>
</feature>
<feature type="chain" id="PRO_0000268974" description="Cytochrome c-552">
    <location>
        <begin position="24"/>
        <end position="463"/>
    </location>
</feature>
<feature type="binding site" description="axial binding residue" evidence="1">
    <location>
        <position position="83"/>
    </location>
    <ligand>
        <name>heme c</name>
        <dbReference type="ChEBI" id="CHEBI:61717"/>
        <label>3</label>
    </ligand>
    <ligandPart>
        <name>Fe</name>
        <dbReference type="ChEBI" id="CHEBI:18248"/>
    </ligandPart>
</feature>
<feature type="binding site" description="covalent" evidence="1">
    <location>
        <position position="111"/>
    </location>
    <ligand>
        <name>heme</name>
        <dbReference type="ChEBI" id="CHEBI:30413"/>
        <label>1</label>
    </ligand>
</feature>
<feature type="binding site" description="covalent" evidence="1">
    <location>
        <position position="114"/>
    </location>
    <ligand>
        <name>heme</name>
        <dbReference type="ChEBI" id="CHEBI:30413"/>
        <label>1</label>
    </ligand>
</feature>
<feature type="binding site" description="axial binding residue" evidence="1">
    <location>
        <position position="115"/>
    </location>
    <ligand>
        <name>heme</name>
        <dbReference type="ChEBI" id="CHEBI:30413"/>
        <label>1</label>
    </ligand>
    <ligandPart>
        <name>Fe</name>
        <dbReference type="ChEBI" id="CHEBI:18248"/>
    </ligandPart>
</feature>
<feature type="binding site" description="covalent" evidence="1">
    <location>
        <position position="149"/>
    </location>
    <ligand>
        <name>heme c</name>
        <dbReference type="ChEBI" id="CHEBI:61717"/>
        <label>2</label>
    </ligand>
</feature>
<feature type="binding site" description="covalent" evidence="1">
    <location>
        <position position="152"/>
    </location>
    <ligand>
        <name>heme c</name>
        <dbReference type="ChEBI" id="CHEBI:61717"/>
        <label>2</label>
    </ligand>
</feature>
<feature type="binding site" description="axial binding residue" evidence="1">
    <location>
        <position position="153"/>
    </location>
    <ligand>
        <name>heme c</name>
        <dbReference type="ChEBI" id="CHEBI:61717"/>
        <label>2</label>
    </ligand>
    <ligandPart>
        <name>Fe</name>
        <dbReference type="ChEBI" id="CHEBI:18248"/>
    </ligandPart>
</feature>
<feature type="binding site" description="covalent" evidence="1">
    <location>
        <position position="191"/>
    </location>
    <ligand>
        <name>heme c</name>
        <dbReference type="ChEBI" id="CHEBI:61717"/>
        <label>3</label>
    </ligand>
</feature>
<feature type="binding site" description="covalent" evidence="1">
    <location>
        <position position="194"/>
    </location>
    <ligand>
        <name>heme c</name>
        <dbReference type="ChEBI" id="CHEBI:61717"/>
        <label>3</label>
    </ligand>
</feature>
<feature type="binding site" description="axial binding residue" evidence="1">
    <location>
        <position position="195"/>
    </location>
    <ligand>
        <name>heme c</name>
        <dbReference type="ChEBI" id="CHEBI:61717"/>
        <label>3</label>
    </ligand>
    <ligandPart>
        <name>Fe</name>
        <dbReference type="ChEBI" id="CHEBI:18248"/>
    </ligandPart>
</feature>
<feature type="binding site" evidence="1">
    <location>
        <position position="197"/>
    </location>
    <ligand>
        <name>Ca(2+)</name>
        <dbReference type="ChEBI" id="CHEBI:29108"/>
    </ligand>
</feature>
<feature type="binding site" evidence="1">
    <location>
        <position position="198"/>
    </location>
    <ligand>
        <name>Ca(2+)</name>
        <dbReference type="ChEBI" id="CHEBI:29108"/>
    </ligand>
</feature>
<feature type="binding site" evidence="1">
    <location>
        <position position="198"/>
    </location>
    <ligand>
        <name>substrate</name>
    </ligand>
</feature>
<feature type="binding site" evidence="1">
    <location>
        <position position="246"/>
    </location>
    <ligand>
        <name>Ca(2+)</name>
        <dbReference type="ChEBI" id="CHEBI:29108"/>
    </ligand>
</feature>
<feature type="binding site" evidence="1">
    <location>
        <position position="248"/>
    </location>
    <ligand>
        <name>Ca(2+)</name>
        <dbReference type="ChEBI" id="CHEBI:29108"/>
    </ligand>
</feature>
<feature type="binding site" evidence="1">
    <location>
        <position position="249"/>
    </location>
    <ligand>
        <name>substrate</name>
    </ligand>
</feature>
<feature type="binding site" description="axial binding residue" evidence="1">
    <location>
        <position position="260"/>
    </location>
    <ligand>
        <name>heme c</name>
        <dbReference type="ChEBI" id="CHEBI:61717"/>
        <label>5</label>
    </ligand>
    <ligandPart>
        <name>Fe</name>
        <dbReference type="ChEBI" id="CHEBI:18248"/>
    </ligandPart>
</feature>
<feature type="binding site" description="covalent" evidence="1">
    <location>
        <position position="267"/>
    </location>
    <ligand>
        <name>heme c</name>
        <dbReference type="ChEBI" id="CHEBI:61717"/>
        <label>4</label>
    </ligand>
</feature>
<feature type="binding site" description="covalent" evidence="1">
    <location>
        <position position="270"/>
    </location>
    <ligand>
        <name>heme c</name>
        <dbReference type="ChEBI" id="CHEBI:61717"/>
        <label>4</label>
    </ligand>
</feature>
<feature type="binding site" description="axial binding residue" evidence="1">
    <location>
        <position position="271"/>
    </location>
    <ligand>
        <name>heme c</name>
        <dbReference type="ChEBI" id="CHEBI:61717"/>
        <label>4</label>
    </ligand>
    <ligandPart>
        <name>Fe</name>
        <dbReference type="ChEBI" id="CHEBI:18248"/>
    </ligandPart>
</feature>
<feature type="binding site" description="axial binding residue" evidence="1">
    <location>
        <position position="286"/>
    </location>
    <ligand>
        <name>heme c</name>
        <dbReference type="ChEBI" id="CHEBI:61717"/>
        <label>2</label>
    </ligand>
    <ligandPart>
        <name>Fe</name>
        <dbReference type="ChEBI" id="CHEBI:18248"/>
    </ligandPart>
</feature>
<feature type="binding site" description="covalent" evidence="1">
    <location>
        <position position="299"/>
    </location>
    <ligand>
        <name>heme c</name>
        <dbReference type="ChEBI" id="CHEBI:61717"/>
        <label>5</label>
    </ligand>
</feature>
<feature type="binding site" description="covalent" evidence="1">
    <location>
        <position position="302"/>
    </location>
    <ligand>
        <name>heme c</name>
        <dbReference type="ChEBI" id="CHEBI:61717"/>
        <label>5</label>
    </ligand>
</feature>
<feature type="binding site" description="axial binding residue" evidence="1">
    <location>
        <position position="303"/>
    </location>
    <ligand>
        <name>heme c</name>
        <dbReference type="ChEBI" id="CHEBI:61717"/>
        <label>5</label>
    </ligand>
    <ligandPart>
        <name>Fe</name>
        <dbReference type="ChEBI" id="CHEBI:18248"/>
    </ligandPart>
</feature>
<feature type="binding site" description="axial binding residue" evidence="1">
    <location>
        <position position="378"/>
    </location>
    <ligand>
        <name>heme c</name>
        <dbReference type="ChEBI" id="CHEBI:61717"/>
        <label>4</label>
    </ligand>
    <ligandPart>
        <name>Fe</name>
        <dbReference type="ChEBI" id="CHEBI:18248"/>
    </ligandPart>
</feature>
<protein>
    <recommendedName>
        <fullName evidence="1">Cytochrome c-552</fullName>
        <ecNumber evidence="1">1.7.2.2</ecNumber>
    </recommendedName>
    <alternativeName>
        <fullName evidence="1">Ammonia-forming cytochrome c nitrite reductase</fullName>
        <shortName evidence="1">Cytochrome c nitrite reductase</shortName>
    </alternativeName>
</protein>
<name>NRFA_SHEFN</name>
<sequence length="463" mass="51800">MNVKSIALSAVIATSFLAAGAMASEKTEPRNEVYKDKFSKQYDSWHATDESKEVVDMLEKVPSLVVLWAGYGFAKDYNAPRGHMYAVTDVTNTLRTGAPKNAEDGPMPMACWSCKSPDVPRVIEEQGEDGYFSGKWAKGGPEIVNVLGCADCHEKGSSKLRMSRPFAERAMTTLNTPFDKASRKDKQSMVCAQCHVEYYFEKTAERPGFVKFPWDMGTTVEQMEVYYDSMEFSDWTHAVSKTPMLKAQHPGYETWKLGVHGQNNVSCVDCHMPKVTNDKGRKFTDHKVGNPFDRFEETCATCHSQSKEFMVKQVEESKQKAQDLKARVETQLVKAHFEAKAAWDAGATEVEMKPILMDIRHSQWRWDYATASHGASSHAPAEVLRILGTSLDKAADARVKLAQLLGAKGVKQPIAYPDTSTKAKAQAALGMNMKTMNAEKAEFKKTLVPKWKEEAKKREATYK</sequence>
<dbReference type="EC" id="1.7.2.2" evidence="1"/>
<dbReference type="EMBL" id="CP000447">
    <property type="protein sequence ID" value="ABI70482.1"/>
    <property type="molecule type" value="Genomic_DNA"/>
</dbReference>
<dbReference type="RefSeq" id="WP_011636109.1">
    <property type="nucleotide sequence ID" value="NC_008345.1"/>
</dbReference>
<dbReference type="SMR" id="Q087T3"/>
<dbReference type="STRING" id="318167.Sfri_0622"/>
<dbReference type="KEGG" id="sfr:Sfri_0622"/>
<dbReference type="eggNOG" id="COG3303">
    <property type="taxonomic scope" value="Bacteria"/>
</dbReference>
<dbReference type="HOGENOM" id="CLU_035040_1_0_6"/>
<dbReference type="UniPathway" id="UPA00653"/>
<dbReference type="Proteomes" id="UP000000684">
    <property type="component" value="Chromosome"/>
</dbReference>
<dbReference type="GO" id="GO:0030288">
    <property type="term" value="C:outer membrane-bounded periplasmic space"/>
    <property type="evidence" value="ECO:0007669"/>
    <property type="project" value="TreeGrafter"/>
</dbReference>
<dbReference type="GO" id="GO:0005509">
    <property type="term" value="F:calcium ion binding"/>
    <property type="evidence" value="ECO:0007669"/>
    <property type="project" value="UniProtKB-UniRule"/>
</dbReference>
<dbReference type="GO" id="GO:0020037">
    <property type="term" value="F:heme binding"/>
    <property type="evidence" value="ECO:0007669"/>
    <property type="project" value="InterPro"/>
</dbReference>
<dbReference type="GO" id="GO:0005506">
    <property type="term" value="F:iron ion binding"/>
    <property type="evidence" value="ECO:0007669"/>
    <property type="project" value="UniProtKB-UniRule"/>
</dbReference>
<dbReference type="GO" id="GO:0042279">
    <property type="term" value="F:nitrite reductase (cytochrome, ammonia-forming) activity"/>
    <property type="evidence" value="ECO:0007669"/>
    <property type="project" value="UniProtKB-UniRule"/>
</dbReference>
<dbReference type="GO" id="GO:0019645">
    <property type="term" value="P:anaerobic electron transport chain"/>
    <property type="evidence" value="ECO:0007669"/>
    <property type="project" value="TreeGrafter"/>
</dbReference>
<dbReference type="GO" id="GO:0042128">
    <property type="term" value="P:nitrate assimilation"/>
    <property type="evidence" value="ECO:0007669"/>
    <property type="project" value="UniProtKB-UniRule"/>
</dbReference>
<dbReference type="CDD" id="cd00548">
    <property type="entry name" value="NrfA-like"/>
    <property type="match status" value="1"/>
</dbReference>
<dbReference type="FunFam" id="1.10.1130.10:FF:000002">
    <property type="entry name" value="Cytochrome c-552"/>
    <property type="match status" value="1"/>
</dbReference>
<dbReference type="FunFam" id="1.20.140.10:FF:000014">
    <property type="entry name" value="Cytochrome c-552"/>
    <property type="match status" value="1"/>
</dbReference>
<dbReference type="Gene3D" id="1.20.140.10">
    <property type="entry name" value="Butyryl-CoA Dehydrogenase, subunit A, domain 3"/>
    <property type="match status" value="1"/>
</dbReference>
<dbReference type="Gene3D" id="1.10.1130.10">
    <property type="entry name" value="Flavocytochrome C3, Chain A"/>
    <property type="match status" value="1"/>
</dbReference>
<dbReference type="HAMAP" id="MF_01182">
    <property type="entry name" value="Cytochrom_C552"/>
    <property type="match status" value="1"/>
</dbReference>
<dbReference type="InterPro" id="IPR003321">
    <property type="entry name" value="Cyt_c552"/>
</dbReference>
<dbReference type="InterPro" id="IPR017570">
    <property type="entry name" value="Cyt_c_NO2Rdtase_formate-dep"/>
</dbReference>
<dbReference type="InterPro" id="IPR036280">
    <property type="entry name" value="Multihaem_cyt_sf"/>
</dbReference>
<dbReference type="NCBIfam" id="TIGR03152">
    <property type="entry name" value="cyto_c552_HCOOH"/>
    <property type="match status" value="1"/>
</dbReference>
<dbReference type="NCBIfam" id="NF008339">
    <property type="entry name" value="PRK11125.1"/>
    <property type="match status" value="1"/>
</dbReference>
<dbReference type="PANTHER" id="PTHR30633:SF0">
    <property type="entry name" value="CYTOCHROME C-552"/>
    <property type="match status" value="1"/>
</dbReference>
<dbReference type="PANTHER" id="PTHR30633">
    <property type="entry name" value="CYTOCHROME C-552 RESPIRATORY NITRITE REDUCTASE"/>
    <property type="match status" value="1"/>
</dbReference>
<dbReference type="Pfam" id="PF02335">
    <property type="entry name" value="Cytochrom_C552"/>
    <property type="match status" value="1"/>
</dbReference>
<dbReference type="PIRSF" id="PIRSF000243">
    <property type="entry name" value="Cyt_c552"/>
    <property type="match status" value="1"/>
</dbReference>
<dbReference type="SUPFAM" id="SSF48695">
    <property type="entry name" value="Multiheme cytochromes"/>
    <property type="match status" value="1"/>
</dbReference>
<dbReference type="PROSITE" id="PS51008">
    <property type="entry name" value="MULTIHEME_CYTC"/>
    <property type="match status" value="1"/>
</dbReference>
<keyword id="KW-0106">Calcium</keyword>
<keyword id="KW-0249">Electron transport</keyword>
<keyword id="KW-0349">Heme</keyword>
<keyword id="KW-0408">Iron</keyword>
<keyword id="KW-0479">Metal-binding</keyword>
<keyword id="KW-0560">Oxidoreductase</keyword>
<keyword id="KW-0574">Periplasm</keyword>
<keyword id="KW-1185">Reference proteome</keyword>
<keyword id="KW-0732">Signal</keyword>
<keyword id="KW-0813">Transport</keyword>
<organism>
    <name type="scientific">Shewanella frigidimarina (strain NCIMB 400)</name>
    <dbReference type="NCBI Taxonomy" id="318167"/>
    <lineage>
        <taxon>Bacteria</taxon>
        <taxon>Pseudomonadati</taxon>
        <taxon>Pseudomonadota</taxon>
        <taxon>Gammaproteobacteria</taxon>
        <taxon>Alteromonadales</taxon>
        <taxon>Shewanellaceae</taxon>
        <taxon>Shewanella</taxon>
    </lineage>
</organism>
<accession>Q087T3</accession>
<gene>
    <name evidence="1" type="primary">nrfA</name>
    <name type="ordered locus">Sfri_0622</name>
</gene>
<proteinExistence type="inferred from homology"/>
<evidence type="ECO:0000255" key="1">
    <source>
        <dbReference type="HAMAP-Rule" id="MF_01182"/>
    </source>
</evidence>
<reference key="1">
    <citation type="submission" date="2006-08" db="EMBL/GenBank/DDBJ databases">
        <title>Complete sequence of Shewanella frigidimarina NCIMB 400.</title>
        <authorList>
            <consortium name="US DOE Joint Genome Institute"/>
            <person name="Copeland A."/>
            <person name="Lucas S."/>
            <person name="Lapidus A."/>
            <person name="Barry K."/>
            <person name="Detter J.C."/>
            <person name="Glavina del Rio T."/>
            <person name="Hammon N."/>
            <person name="Israni S."/>
            <person name="Dalin E."/>
            <person name="Tice H."/>
            <person name="Pitluck S."/>
            <person name="Fredrickson J.K."/>
            <person name="Kolker E."/>
            <person name="McCuel L.A."/>
            <person name="DiChristina T."/>
            <person name="Nealson K.H."/>
            <person name="Newman D."/>
            <person name="Tiedje J.M."/>
            <person name="Zhou J."/>
            <person name="Romine M.F."/>
            <person name="Culley D.E."/>
            <person name="Serres M."/>
            <person name="Chertkov O."/>
            <person name="Brettin T."/>
            <person name="Bruce D."/>
            <person name="Han C."/>
            <person name="Tapia R."/>
            <person name="Gilna P."/>
            <person name="Schmutz J."/>
            <person name="Larimer F."/>
            <person name="Land M."/>
            <person name="Hauser L."/>
            <person name="Kyrpides N."/>
            <person name="Mikhailova N."/>
            <person name="Richardson P."/>
        </authorList>
    </citation>
    <scope>NUCLEOTIDE SEQUENCE [LARGE SCALE GENOMIC DNA]</scope>
    <source>
        <strain>NCIMB 400</strain>
    </source>
</reference>
<comment type="function">
    <text evidence="1">Catalyzes the reduction of nitrite to ammonia, consuming six electrons in the process.</text>
</comment>
<comment type="catalytic activity">
    <reaction evidence="1">
        <text>6 Fe(III)-[cytochrome c] + NH4(+) + 2 H2O = 6 Fe(II)-[cytochrome c] + nitrite + 8 H(+)</text>
        <dbReference type="Rhea" id="RHEA:13089"/>
        <dbReference type="Rhea" id="RHEA-COMP:10350"/>
        <dbReference type="Rhea" id="RHEA-COMP:14399"/>
        <dbReference type="ChEBI" id="CHEBI:15377"/>
        <dbReference type="ChEBI" id="CHEBI:15378"/>
        <dbReference type="ChEBI" id="CHEBI:16301"/>
        <dbReference type="ChEBI" id="CHEBI:28938"/>
        <dbReference type="ChEBI" id="CHEBI:29033"/>
        <dbReference type="ChEBI" id="CHEBI:29034"/>
        <dbReference type="EC" id="1.7.2.2"/>
    </reaction>
</comment>
<comment type="cofactor">
    <cofactor evidence="1">
        <name>Ca(2+)</name>
        <dbReference type="ChEBI" id="CHEBI:29108"/>
    </cofactor>
    <text evidence="1">Binds 1 Ca(2+) ion per monomer.</text>
</comment>
<comment type="cofactor">
    <cofactor evidence="1">
        <name>heme c</name>
        <dbReference type="ChEBI" id="CHEBI:61717"/>
    </cofactor>
    <text evidence="1">Binds 5 heme c groups covalently per monomer.</text>
</comment>
<comment type="pathway">
    <text evidence="1">Nitrogen metabolism; nitrate reduction (assimilation).</text>
</comment>
<comment type="subcellular location">
    <subcellularLocation>
        <location evidence="1">Periplasm</location>
    </subcellularLocation>
</comment>
<comment type="similarity">
    <text evidence="1">Belongs to the cytochrome c-552 family.</text>
</comment>